<protein>
    <recommendedName>
        <fullName>Uncharacterized transcriptional regulatory protein C530.05</fullName>
    </recommendedName>
</protein>
<accession>O59741</accession>
<accession>Q9UU51</accession>
<organism>
    <name type="scientific">Schizosaccharomyces pombe (strain 972 / ATCC 24843)</name>
    <name type="common">Fission yeast</name>
    <dbReference type="NCBI Taxonomy" id="284812"/>
    <lineage>
        <taxon>Eukaryota</taxon>
        <taxon>Fungi</taxon>
        <taxon>Dikarya</taxon>
        <taxon>Ascomycota</taxon>
        <taxon>Taphrinomycotina</taxon>
        <taxon>Schizosaccharomycetes</taxon>
        <taxon>Schizosaccharomycetales</taxon>
        <taxon>Schizosaccharomycetaceae</taxon>
        <taxon>Schizosaccharomyces</taxon>
    </lineage>
</organism>
<feature type="chain" id="PRO_0000115013" description="Uncharacterized transcriptional regulatory protein C530.05">
    <location>
        <begin position="1"/>
        <end position="762"/>
    </location>
</feature>
<feature type="DNA-binding region" description="Zn(2)-C6 fungal-type" evidence="1">
    <location>
        <begin position="30"/>
        <end position="57"/>
    </location>
</feature>
<feature type="region of interest" description="Disordered" evidence="2">
    <location>
        <begin position="1"/>
        <end position="26"/>
    </location>
</feature>
<feature type="region of interest" description="Disordered" evidence="2">
    <location>
        <begin position="647"/>
        <end position="668"/>
    </location>
</feature>
<feature type="compositionally biased region" description="Basic and acidic residues" evidence="2">
    <location>
        <begin position="12"/>
        <end position="21"/>
    </location>
</feature>
<sequence>MENLKSASPEEDSPRHGDNMGKPKRIPRACDMCRKRKIRCDGKQPACSNCVSHGIPCVFTARPKRRTGQRQMYIKSLVSRLEQMESTLRSVIPNYDQQPDIIHPSSTPKNYHDLNCTKGETSSDDSTDDIAFLNEKMGTLVTTPIGSQKYFGSSSTFSIIQHAAKFASGVESDKVLEHLSMAKSGCLFDPDESFDGSKAELPSSEIANIYIDAYFKSYNPLFPVFTRENFYQKFGSPNCFKKPDGSIDLVNYASYVVVLSLGCLAIADTEEQVSRANALFKNTLGISIEVTKDMSFRTLVFNFLTSVYYCAVSKPNAVWLNVGVVVRVAQTLGLHRNSAMWSIGKEDAEEKARLFWYIYYLDRVSSMMTGKPVAFQDDDIDQMVPFYSIYCYYGLKPPEGDPLGTFNFLEAEVQLTRIVGQVLKELYSVSGMKSNSSQVMEKILEFDLLLNNWYNSLPDCMQPRNRFKIPKFCSSNLILTSAIYYSCLILIHRHSLTKNLQVNCVHRGTGSITDSQALCIAAARSITNLFVESVDLQPLIMKIIMYHAFTSSIIIFISILKRPLASICSEDLNCLISVKNRLISFETHGFVRLNVVMDALESMISTAQAAMQKAKQIAINFSSNLATNEDVTNSGMPDIADVSLKSQSHVPPRISSNHSDTSVKSNSPSSIFDNSGYLNSLNNSILQMHQNLQNSSNTNDQYKFDSVQENELHANITPVLDQTMSMFPFKDQLDLNFAAANVYNPNVFDDMGLDCSFYGNGL</sequence>
<reference key="1">
    <citation type="journal article" date="2002" name="Nature">
        <title>The genome sequence of Schizosaccharomyces pombe.</title>
        <authorList>
            <person name="Wood V."/>
            <person name="Gwilliam R."/>
            <person name="Rajandream M.A."/>
            <person name="Lyne M.H."/>
            <person name="Lyne R."/>
            <person name="Stewart A."/>
            <person name="Sgouros J.G."/>
            <person name="Peat N."/>
            <person name="Hayles J."/>
            <person name="Baker S.G."/>
            <person name="Basham D."/>
            <person name="Bowman S."/>
            <person name="Brooks K."/>
            <person name="Brown D."/>
            <person name="Brown S."/>
            <person name="Chillingworth T."/>
            <person name="Churcher C.M."/>
            <person name="Collins M."/>
            <person name="Connor R."/>
            <person name="Cronin A."/>
            <person name="Davis P."/>
            <person name="Feltwell T."/>
            <person name="Fraser A."/>
            <person name="Gentles S."/>
            <person name="Goble A."/>
            <person name="Hamlin N."/>
            <person name="Harris D.E."/>
            <person name="Hidalgo J."/>
            <person name="Hodgson G."/>
            <person name="Holroyd S."/>
            <person name="Hornsby T."/>
            <person name="Howarth S."/>
            <person name="Huckle E.J."/>
            <person name="Hunt S."/>
            <person name="Jagels K."/>
            <person name="James K.D."/>
            <person name="Jones L."/>
            <person name="Jones M."/>
            <person name="Leather S."/>
            <person name="McDonald S."/>
            <person name="McLean J."/>
            <person name="Mooney P."/>
            <person name="Moule S."/>
            <person name="Mungall K.L."/>
            <person name="Murphy L.D."/>
            <person name="Niblett D."/>
            <person name="Odell C."/>
            <person name="Oliver K."/>
            <person name="O'Neil S."/>
            <person name="Pearson D."/>
            <person name="Quail M.A."/>
            <person name="Rabbinowitsch E."/>
            <person name="Rutherford K.M."/>
            <person name="Rutter S."/>
            <person name="Saunders D."/>
            <person name="Seeger K."/>
            <person name="Sharp S."/>
            <person name="Skelton J."/>
            <person name="Simmonds M.N."/>
            <person name="Squares R."/>
            <person name="Squares S."/>
            <person name="Stevens K."/>
            <person name="Taylor K."/>
            <person name="Taylor R.G."/>
            <person name="Tivey A."/>
            <person name="Walsh S.V."/>
            <person name="Warren T."/>
            <person name="Whitehead S."/>
            <person name="Woodward J.R."/>
            <person name="Volckaert G."/>
            <person name="Aert R."/>
            <person name="Robben J."/>
            <person name="Grymonprez B."/>
            <person name="Weltjens I."/>
            <person name="Vanstreels E."/>
            <person name="Rieger M."/>
            <person name="Schaefer M."/>
            <person name="Mueller-Auer S."/>
            <person name="Gabel C."/>
            <person name="Fuchs M."/>
            <person name="Duesterhoeft A."/>
            <person name="Fritzc C."/>
            <person name="Holzer E."/>
            <person name="Moestl D."/>
            <person name="Hilbert H."/>
            <person name="Borzym K."/>
            <person name="Langer I."/>
            <person name="Beck A."/>
            <person name="Lehrach H."/>
            <person name="Reinhardt R."/>
            <person name="Pohl T.M."/>
            <person name="Eger P."/>
            <person name="Zimmermann W."/>
            <person name="Wedler H."/>
            <person name="Wambutt R."/>
            <person name="Purnelle B."/>
            <person name="Goffeau A."/>
            <person name="Cadieu E."/>
            <person name="Dreano S."/>
            <person name="Gloux S."/>
            <person name="Lelaure V."/>
            <person name="Mottier S."/>
            <person name="Galibert F."/>
            <person name="Aves S.J."/>
            <person name="Xiang Z."/>
            <person name="Hunt C."/>
            <person name="Moore K."/>
            <person name="Hurst S.M."/>
            <person name="Lucas M."/>
            <person name="Rochet M."/>
            <person name="Gaillardin C."/>
            <person name="Tallada V.A."/>
            <person name="Garzon A."/>
            <person name="Thode G."/>
            <person name="Daga R.R."/>
            <person name="Cruzado L."/>
            <person name="Jimenez J."/>
            <person name="Sanchez M."/>
            <person name="del Rey F."/>
            <person name="Benito J."/>
            <person name="Dominguez A."/>
            <person name="Revuelta J.L."/>
            <person name="Moreno S."/>
            <person name="Armstrong J."/>
            <person name="Forsburg S.L."/>
            <person name="Cerutti L."/>
            <person name="Lowe T."/>
            <person name="McCombie W.R."/>
            <person name="Paulsen I."/>
            <person name="Potashkin J."/>
            <person name="Shpakovski G.V."/>
            <person name="Ussery D."/>
            <person name="Barrell B.G."/>
            <person name="Nurse P."/>
        </authorList>
    </citation>
    <scope>NUCLEOTIDE SEQUENCE [LARGE SCALE GENOMIC DNA]</scope>
    <source>
        <strain>972 / ATCC 24843</strain>
    </source>
</reference>
<reference key="2">
    <citation type="journal article" date="2011" name="Science">
        <title>Comparative functional genomics of the fission yeasts.</title>
        <authorList>
            <person name="Rhind N."/>
            <person name="Chen Z."/>
            <person name="Yassour M."/>
            <person name="Thompson D.A."/>
            <person name="Haas B.J."/>
            <person name="Habib N."/>
            <person name="Wapinski I."/>
            <person name="Roy S."/>
            <person name="Lin M.F."/>
            <person name="Heiman D.I."/>
            <person name="Young S.K."/>
            <person name="Furuya K."/>
            <person name="Guo Y."/>
            <person name="Pidoux A."/>
            <person name="Chen H.M."/>
            <person name="Robbertse B."/>
            <person name="Goldberg J.M."/>
            <person name="Aoki K."/>
            <person name="Bayne E.H."/>
            <person name="Berlin A.M."/>
            <person name="Desjardins C.A."/>
            <person name="Dobbs E."/>
            <person name="Dukaj L."/>
            <person name="Fan L."/>
            <person name="FitzGerald M.G."/>
            <person name="French C."/>
            <person name="Gujja S."/>
            <person name="Hansen K."/>
            <person name="Keifenheim D."/>
            <person name="Levin J.Z."/>
            <person name="Mosher R.A."/>
            <person name="Mueller C.A."/>
            <person name="Pfiffner J."/>
            <person name="Priest M."/>
            <person name="Russ C."/>
            <person name="Smialowska A."/>
            <person name="Swoboda P."/>
            <person name="Sykes S.M."/>
            <person name="Vaughn M."/>
            <person name="Vengrova S."/>
            <person name="Yoder R."/>
            <person name="Zeng Q."/>
            <person name="Allshire R."/>
            <person name="Baulcombe D."/>
            <person name="Birren B.W."/>
            <person name="Brown W."/>
            <person name="Ekwall K."/>
            <person name="Kellis M."/>
            <person name="Leatherwood J."/>
            <person name="Levin H."/>
            <person name="Margalit H."/>
            <person name="Martienssen R."/>
            <person name="Nieduszynski C.A."/>
            <person name="Spatafora J.W."/>
            <person name="Friedman N."/>
            <person name="Dalgaard J.Z."/>
            <person name="Baumann P."/>
            <person name="Niki H."/>
            <person name="Regev A."/>
            <person name="Nusbaum C."/>
        </authorList>
    </citation>
    <scope>REVISION OF GENE MODEL</scope>
</reference>
<reference key="3">
    <citation type="journal article" date="2000" name="Genes Cells">
        <title>Large-scale screening of intracellular protein localization in living fission yeast cells by the use of a GFP-fusion genomic DNA library.</title>
        <authorList>
            <person name="Ding D.-Q."/>
            <person name="Tomita Y."/>
            <person name="Yamamoto A."/>
            <person name="Chikashige Y."/>
            <person name="Haraguchi T."/>
            <person name="Hiraoka Y."/>
        </authorList>
    </citation>
    <scope>NUCLEOTIDE SEQUENCE [LARGE SCALE GENOMIC DNA] OF 20-90</scope>
    <scope>SUBCELLULAR LOCATION</scope>
    <source>
        <strain>ATCC 38364 / 968</strain>
    </source>
</reference>
<evidence type="ECO:0000255" key="1">
    <source>
        <dbReference type="PROSITE-ProRule" id="PRU00227"/>
    </source>
</evidence>
<evidence type="ECO:0000256" key="2">
    <source>
        <dbReference type="SAM" id="MobiDB-lite"/>
    </source>
</evidence>
<evidence type="ECO:0000269" key="3">
    <source>
    </source>
</evidence>
<proteinExistence type="inferred from homology"/>
<keyword id="KW-0238">DNA-binding</keyword>
<keyword id="KW-0479">Metal-binding</keyword>
<keyword id="KW-0539">Nucleus</keyword>
<keyword id="KW-1185">Reference proteome</keyword>
<keyword id="KW-0804">Transcription</keyword>
<keyword id="KW-0805">Transcription regulation</keyword>
<keyword id="KW-0862">Zinc</keyword>
<comment type="subcellular location">
    <subcellularLocation>
        <location evidence="1 3">Nucleus</location>
    </subcellularLocation>
</comment>
<gene>
    <name type="ORF">SPBC530.05</name>
</gene>
<dbReference type="EMBL" id="CU329671">
    <property type="protein sequence ID" value="CAA19171.2"/>
    <property type="molecule type" value="Genomic_DNA"/>
</dbReference>
<dbReference type="EMBL" id="AB027808">
    <property type="protein sequence ID" value="BAA87112.1"/>
    <property type="molecule type" value="Genomic_DNA"/>
</dbReference>
<dbReference type="PIR" id="T40521">
    <property type="entry name" value="T40521"/>
</dbReference>
<dbReference type="SMR" id="O59741"/>
<dbReference type="BioGRID" id="277419">
    <property type="interactions" value="22"/>
</dbReference>
<dbReference type="STRING" id="284812.O59741"/>
<dbReference type="iPTMnet" id="O59741"/>
<dbReference type="PaxDb" id="4896-SPBC530.05.1"/>
<dbReference type="EnsemblFungi" id="SPBC530.05.1">
    <property type="protein sequence ID" value="SPBC530.05.1:pep"/>
    <property type="gene ID" value="SPBC530.05"/>
</dbReference>
<dbReference type="KEGG" id="spo:2540903"/>
<dbReference type="PomBase" id="SPBC530.05"/>
<dbReference type="VEuPathDB" id="FungiDB:SPBC530.05"/>
<dbReference type="eggNOG" id="ENOG502QZJZ">
    <property type="taxonomic scope" value="Eukaryota"/>
</dbReference>
<dbReference type="HOGENOM" id="CLU_369248_0_0_1"/>
<dbReference type="InParanoid" id="O59741"/>
<dbReference type="OMA" id="ECTHNIP"/>
<dbReference type="PRO" id="PR:O59741"/>
<dbReference type="Proteomes" id="UP000002485">
    <property type="component" value="Chromosome II"/>
</dbReference>
<dbReference type="GO" id="GO:0005829">
    <property type="term" value="C:cytosol"/>
    <property type="evidence" value="ECO:0007005"/>
    <property type="project" value="PomBase"/>
</dbReference>
<dbReference type="GO" id="GO:0005634">
    <property type="term" value="C:nucleus"/>
    <property type="evidence" value="ECO:0007005"/>
    <property type="project" value="PomBase"/>
</dbReference>
<dbReference type="GO" id="GO:0000981">
    <property type="term" value="F:DNA-binding transcription factor activity, RNA polymerase II-specific"/>
    <property type="evidence" value="ECO:0000318"/>
    <property type="project" value="GO_Central"/>
</dbReference>
<dbReference type="GO" id="GO:0000978">
    <property type="term" value="F:RNA polymerase II cis-regulatory region sequence-specific DNA binding"/>
    <property type="evidence" value="ECO:0000255"/>
    <property type="project" value="PomBase"/>
</dbReference>
<dbReference type="GO" id="GO:0043565">
    <property type="term" value="F:sequence-specific DNA binding"/>
    <property type="evidence" value="ECO:0000318"/>
    <property type="project" value="GO_Central"/>
</dbReference>
<dbReference type="GO" id="GO:0008270">
    <property type="term" value="F:zinc ion binding"/>
    <property type="evidence" value="ECO:0000255"/>
    <property type="project" value="PomBase"/>
</dbReference>
<dbReference type="GO" id="GO:0006351">
    <property type="term" value="P:DNA-templated transcription"/>
    <property type="evidence" value="ECO:0007669"/>
    <property type="project" value="InterPro"/>
</dbReference>
<dbReference type="GO" id="GO:0045944">
    <property type="term" value="P:positive regulation of transcription by RNA polymerase II"/>
    <property type="evidence" value="ECO:0000315"/>
    <property type="project" value="PomBase"/>
</dbReference>
<dbReference type="CDD" id="cd12148">
    <property type="entry name" value="fungal_TF_MHR"/>
    <property type="match status" value="1"/>
</dbReference>
<dbReference type="CDD" id="cd00067">
    <property type="entry name" value="GAL4"/>
    <property type="match status" value="1"/>
</dbReference>
<dbReference type="Gene3D" id="4.10.240.10">
    <property type="entry name" value="Zn(2)-C6 fungal-type DNA-binding domain"/>
    <property type="match status" value="1"/>
</dbReference>
<dbReference type="InterPro" id="IPR050987">
    <property type="entry name" value="AtrR-like"/>
</dbReference>
<dbReference type="InterPro" id="IPR007219">
    <property type="entry name" value="Transcription_factor_dom_fun"/>
</dbReference>
<dbReference type="InterPro" id="IPR036864">
    <property type="entry name" value="Zn2-C6_fun-type_DNA-bd_sf"/>
</dbReference>
<dbReference type="InterPro" id="IPR001138">
    <property type="entry name" value="Zn2Cys6_DnaBD"/>
</dbReference>
<dbReference type="PANTHER" id="PTHR46910:SF36">
    <property type="entry name" value="TRANSCRIPTION FACTOR"/>
    <property type="match status" value="1"/>
</dbReference>
<dbReference type="PANTHER" id="PTHR46910">
    <property type="entry name" value="TRANSCRIPTION FACTOR PDR1"/>
    <property type="match status" value="1"/>
</dbReference>
<dbReference type="Pfam" id="PF04082">
    <property type="entry name" value="Fungal_trans"/>
    <property type="match status" value="1"/>
</dbReference>
<dbReference type="Pfam" id="PF00172">
    <property type="entry name" value="Zn_clus"/>
    <property type="match status" value="1"/>
</dbReference>
<dbReference type="SMART" id="SM00906">
    <property type="entry name" value="Fungal_trans"/>
    <property type="match status" value="1"/>
</dbReference>
<dbReference type="SMART" id="SM00066">
    <property type="entry name" value="GAL4"/>
    <property type="match status" value="1"/>
</dbReference>
<dbReference type="SUPFAM" id="SSF57701">
    <property type="entry name" value="Zn2/Cys6 DNA-binding domain"/>
    <property type="match status" value="1"/>
</dbReference>
<dbReference type="PROSITE" id="PS00463">
    <property type="entry name" value="ZN2_CY6_FUNGAL_1"/>
    <property type="match status" value="1"/>
</dbReference>
<dbReference type="PROSITE" id="PS50048">
    <property type="entry name" value="ZN2_CY6_FUNGAL_2"/>
    <property type="match status" value="1"/>
</dbReference>
<name>YN25_SCHPO</name>